<proteinExistence type="evidence at protein level"/>
<name>RCA_ARATH</name>
<organism>
    <name type="scientific">Arabidopsis thaliana</name>
    <name type="common">Mouse-ear cress</name>
    <dbReference type="NCBI Taxonomy" id="3702"/>
    <lineage>
        <taxon>Eukaryota</taxon>
        <taxon>Viridiplantae</taxon>
        <taxon>Streptophyta</taxon>
        <taxon>Embryophyta</taxon>
        <taxon>Tracheophyta</taxon>
        <taxon>Spermatophyta</taxon>
        <taxon>Magnoliopsida</taxon>
        <taxon>eudicotyledons</taxon>
        <taxon>Gunneridae</taxon>
        <taxon>Pentapetalae</taxon>
        <taxon>rosids</taxon>
        <taxon>malvids</taxon>
        <taxon>Brassicales</taxon>
        <taxon>Brassicaceae</taxon>
        <taxon>Camelineae</taxon>
        <taxon>Arabidopsis</taxon>
    </lineage>
</organism>
<sequence length="474" mass="51981">MAAAVSTVGAINRAPLSLNGSGSGAVSAPASTFLGKKVVTVSRFAQSNKKSNGSFKVLAVKEDKQTDGDRWRGLAYDTSDDQQDITRGKGMVDSVFQAPMGTGTHHAVLSSYEYVSQGLRQYNLDNMMDGFYIAPAFMDKLVVHITKNFLTLPNIKVPLILGIWGGKGQGKSFQCELVMAKMGINPIMMSAGELESGNAGEPAKLIRQRYREAADLIKKGKMCCLFINDLDAGAGRMGGTTQYTVNNQMVNATLMNIADNPTNVQLPGMYNKEENARVPIICTGNDFSTLYAPLIRDGRMEKFYWAPTREDRIGVCKGIFRTDKIKDEDIVTLVDQFPGQSIDFFGALRARVYDDEVRKFVESLGVEKIGKRLVNSREGPPVFEQPEMTYEKLMEYGNMLVMEQENVKRVQLAETYLSQAALGDANADAIGRGTFYGKGAQQVNLPVPEGCTDPVAENFDPTARSDDGTCVYNF</sequence>
<comment type="function">
    <text>Activation of RuBisCO (ribulose-1,5-bisphosphate carboxylase/oxygenase; EC 4.1.1.39) involves the ATP-dependent carboxylation of the epsilon-amino group of lysine leading to a carbamate structure.</text>
</comment>
<comment type="subcellular location">
    <subcellularLocation>
        <location>Plastid</location>
        <location>Chloroplast stroma</location>
    </subcellularLocation>
    <subcellularLocation>
        <location evidence="2">Plastid</location>
        <location evidence="2">Chloroplast</location>
        <location evidence="2">Plastoglobule</location>
    </subcellularLocation>
</comment>
<comment type="alternative products">
    <event type="alternative splicing"/>
    <isoform>
        <id>P10896-1</id>
        <name>Long</name>
        <sequence type="displayed"/>
    </isoform>
    <isoform>
        <id>P10896-2</id>
        <name>Short</name>
        <sequence type="described" ref="VSP_005539"/>
    </isoform>
</comment>
<comment type="PTM">
    <text evidence="3">Phosphorylated at Thr-78 by CK2.</text>
</comment>
<comment type="similarity">
    <text evidence="5">Belongs to the RuBisCO activase family.</text>
</comment>
<evidence type="ECO:0000255" key="1"/>
<evidence type="ECO:0000269" key="2">
    <source>
    </source>
</evidence>
<evidence type="ECO:0000269" key="3">
    <source>
    </source>
</evidence>
<evidence type="ECO:0000303" key="4">
    <source>
    </source>
</evidence>
<evidence type="ECO:0000305" key="5"/>
<evidence type="ECO:0007744" key="6">
    <source>
    </source>
</evidence>
<evidence type="ECO:0007829" key="7">
    <source>
        <dbReference type="PDB" id="4W5W"/>
    </source>
</evidence>
<dbReference type="EMBL" id="X14212">
    <property type="protein sequence ID" value="CAA32429.1"/>
    <property type="molecule type" value="mRNA"/>
</dbReference>
<dbReference type="EMBL" id="M86720">
    <property type="protein sequence ID" value="AAA20202.1"/>
    <property type="molecule type" value="Genomic_DNA"/>
</dbReference>
<dbReference type="EMBL" id="M86720">
    <property type="protein sequence ID" value="AAA20203.1"/>
    <property type="molecule type" value="Genomic_DNA"/>
</dbReference>
<dbReference type="EMBL" id="AC003000">
    <property type="protein sequence ID" value="AAB87122.1"/>
    <property type="molecule type" value="Genomic_DNA"/>
</dbReference>
<dbReference type="EMBL" id="CP002685">
    <property type="protein sequence ID" value="AEC09714.1"/>
    <property type="molecule type" value="Genomic_DNA"/>
</dbReference>
<dbReference type="EMBL" id="CP002685">
    <property type="protein sequence ID" value="AEC09715.1"/>
    <property type="molecule type" value="Genomic_DNA"/>
</dbReference>
<dbReference type="EMBL" id="AY052703">
    <property type="protein sequence ID" value="AAK96607.1"/>
    <property type="molecule type" value="mRNA"/>
</dbReference>
<dbReference type="EMBL" id="AF325049">
    <property type="protein sequence ID" value="AAG40401.1"/>
    <property type="molecule type" value="mRNA"/>
</dbReference>
<dbReference type="EMBL" id="AY052290">
    <property type="protein sequence ID" value="AAK96483.1"/>
    <property type="molecule type" value="mRNA"/>
</dbReference>
<dbReference type="EMBL" id="AY056108">
    <property type="protein sequence ID" value="AAL06995.1"/>
    <property type="molecule type" value="mRNA"/>
</dbReference>
<dbReference type="EMBL" id="BT000613">
    <property type="protein sequence ID" value="AAN18180.1"/>
    <property type="molecule type" value="mRNA"/>
</dbReference>
<dbReference type="EMBL" id="BT000710">
    <property type="protein sequence ID" value="AAN31853.1"/>
    <property type="molecule type" value="mRNA"/>
</dbReference>
<dbReference type="EMBL" id="AY088487">
    <property type="protein sequence ID" value="AAM66023.1"/>
    <property type="molecule type" value="mRNA"/>
</dbReference>
<dbReference type="PIR" id="S04048">
    <property type="entry name" value="S04048"/>
</dbReference>
<dbReference type="PIR" id="T01002">
    <property type="entry name" value="T01002"/>
</dbReference>
<dbReference type="PIR" id="T01003">
    <property type="entry name" value="T01003"/>
</dbReference>
<dbReference type="RefSeq" id="NP_565913.1">
    <molecule id="P10896-1"/>
    <property type="nucleotide sequence ID" value="NM_129531.3"/>
</dbReference>
<dbReference type="RefSeq" id="NP_850320.1">
    <molecule id="P10896-2"/>
    <property type="nucleotide sequence ID" value="NM_179989.3"/>
</dbReference>
<dbReference type="PDB" id="4W5W">
    <property type="method" value="X-ray"/>
    <property type="resolution" value="2.90 A"/>
    <property type="chains" value="A=59-437"/>
</dbReference>
<dbReference type="PDBsum" id="4W5W"/>
<dbReference type="SMR" id="P10896"/>
<dbReference type="BioGRID" id="3896">
    <property type="interactions" value="3"/>
</dbReference>
<dbReference type="FunCoup" id="P10896">
    <property type="interactions" value="1184"/>
</dbReference>
<dbReference type="IntAct" id="P10896">
    <property type="interactions" value="2"/>
</dbReference>
<dbReference type="MINT" id="P10896"/>
<dbReference type="STRING" id="3702.P10896"/>
<dbReference type="iPTMnet" id="P10896"/>
<dbReference type="MetOSite" id="P10896"/>
<dbReference type="PaxDb" id="3702-AT2G39730.1"/>
<dbReference type="ProteomicsDB" id="236535">
    <molecule id="P10896-1"/>
</dbReference>
<dbReference type="EnsemblPlants" id="AT2G39730.1">
    <molecule id="P10896-1"/>
    <property type="protein sequence ID" value="AT2G39730.1"/>
    <property type="gene ID" value="AT2G39730"/>
</dbReference>
<dbReference type="EnsemblPlants" id="AT2G39730.2">
    <molecule id="P10896-2"/>
    <property type="protein sequence ID" value="AT2G39730.2"/>
    <property type="gene ID" value="AT2G39730"/>
</dbReference>
<dbReference type="GeneID" id="818558"/>
<dbReference type="Gramene" id="AT2G39730.1">
    <molecule id="P10896-1"/>
    <property type="protein sequence ID" value="AT2G39730.1"/>
    <property type="gene ID" value="AT2G39730"/>
</dbReference>
<dbReference type="Gramene" id="AT2G39730.2">
    <molecule id="P10896-2"/>
    <property type="protein sequence ID" value="AT2G39730.2"/>
    <property type="gene ID" value="AT2G39730"/>
</dbReference>
<dbReference type="KEGG" id="ath:AT2G39730"/>
<dbReference type="Araport" id="AT2G39730"/>
<dbReference type="TAIR" id="AT2G39730">
    <property type="gene designation" value="RCA"/>
</dbReference>
<dbReference type="eggNOG" id="KOG0651">
    <property type="taxonomic scope" value="Eukaryota"/>
</dbReference>
<dbReference type="HOGENOM" id="CLU_038420_0_0_1"/>
<dbReference type="InParanoid" id="P10896"/>
<dbReference type="OrthoDB" id="2014558at2759"/>
<dbReference type="PhylomeDB" id="P10896"/>
<dbReference type="CD-CODE" id="4299E36E">
    <property type="entry name" value="Nucleolus"/>
</dbReference>
<dbReference type="EvolutionaryTrace" id="P10896"/>
<dbReference type="PRO" id="PR:P10896"/>
<dbReference type="Proteomes" id="UP000006548">
    <property type="component" value="Chromosome 2"/>
</dbReference>
<dbReference type="ExpressionAtlas" id="P10896">
    <property type="expression patterns" value="baseline and differential"/>
</dbReference>
<dbReference type="GO" id="GO:0048046">
    <property type="term" value="C:apoplast"/>
    <property type="evidence" value="ECO:0007005"/>
    <property type="project" value="TAIR"/>
</dbReference>
<dbReference type="GO" id="GO:0009507">
    <property type="term" value="C:chloroplast"/>
    <property type="evidence" value="ECO:0000314"/>
    <property type="project" value="TAIR"/>
</dbReference>
<dbReference type="GO" id="GO:0009941">
    <property type="term" value="C:chloroplast envelope"/>
    <property type="evidence" value="ECO:0007005"/>
    <property type="project" value="TAIR"/>
</dbReference>
<dbReference type="GO" id="GO:0009570">
    <property type="term" value="C:chloroplast stroma"/>
    <property type="evidence" value="ECO:0007005"/>
    <property type="project" value="TAIR"/>
</dbReference>
<dbReference type="GO" id="GO:0009535">
    <property type="term" value="C:chloroplast thylakoid membrane"/>
    <property type="evidence" value="ECO:0007005"/>
    <property type="project" value="TAIR"/>
</dbReference>
<dbReference type="GO" id="GO:0005794">
    <property type="term" value="C:Golgi apparatus"/>
    <property type="evidence" value="ECO:0007005"/>
    <property type="project" value="TAIR"/>
</dbReference>
<dbReference type="GO" id="GO:0005634">
    <property type="term" value="C:nucleus"/>
    <property type="evidence" value="ECO:0007005"/>
    <property type="project" value="TAIR"/>
</dbReference>
<dbReference type="GO" id="GO:0009505">
    <property type="term" value="C:plant-type cell wall"/>
    <property type="evidence" value="ECO:0007005"/>
    <property type="project" value="TAIR"/>
</dbReference>
<dbReference type="GO" id="GO:0010287">
    <property type="term" value="C:plastoglobule"/>
    <property type="evidence" value="ECO:0007669"/>
    <property type="project" value="UniProtKB-SubCell"/>
</dbReference>
<dbReference type="GO" id="GO:0010319">
    <property type="term" value="C:stromule"/>
    <property type="evidence" value="ECO:0000314"/>
    <property type="project" value="TAIR"/>
</dbReference>
<dbReference type="GO" id="GO:0009579">
    <property type="term" value="C:thylakoid"/>
    <property type="evidence" value="ECO:0007005"/>
    <property type="project" value="TAIR"/>
</dbReference>
<dbReference type="GO" id="GO:0043531">
    <property type="term" value="F:ADP binding"/>
    <property type="evidence" value="ECO:0000314"/>
    <property type="project" value="TAIR"/>
</dbReference>
<dbReference type="GO" id="GO:0005524">
    <property type="term" value="F:ATP binding"/>
    <property type="evidence" value="ECO:0000314"/>
    <property type="project" value="TAIR"/>
</dbReference>
<dbReference type="GO" id="GO:0016887">
    <property type="term" value="F:ATP hydrolysis activity"/>
    <property type="evidence" value="ECO:0007669"/>
    <property type="project" value="InterPro"/>
</dbReference>
<dbReference type="GO" id="GO:0030234">
    <property type="term" value="F:enzyme regulator activity"/>
    <property type="evidence" value="ECO:0000314"/>
    <property type="project" value="TAIR"/>
</dbReference>
<dbReference type="GO" id="GO:0003729">
    <property type="term" value="F:mRNA binding"/>
    <property type="evidence" value="ECO:0000314"/>
    <property type="project" value="TAIR"/>
</dbReference>
<dbReference type="GO" id="GO:0046863">
    <property type="term" value="F:ribulose-1,5-bisphosphate carboxylase/oxygenase activator activity"/>
    <property type="evidence" value="ECO:0000314"/>
    <property type="project" value="TAIR"/>
</dbReference>
<dbReference type="GO" id="GO:0010150">
    <property type="term" value="P:leaf senescence"/>
    <property type="evidence" value="ECO:0000315"/>
    <property type="project" value="TAIR"/>
</dbReference>
<dbReference type="GO" id="GO:0009409">
    <property type="term" value="P:response to cold"/>
    <property type="evidence" value="ECO:0000270"/>
    <property type="project" value="TAIR"/>
</dbReference>
<dbReference type="GO" id="GO:0009753">
    <property type="term" value="P:response to jasmonic acid"/>
    <property type="evidence" value="ECO:0000270"/>
    <property type="project" value="TAIR"/>
</dbReference>
<dbReference type="GO" id="GO:0009416">
    <property type="term" value="P:response to light stimulus"/>
    <property type="evidence" value="ECO:0000270"/>
    <property type="project" value="TAIR"/>
</dbReference>
<dbReference type="FunFam" id="1.10.8.1070:FF:000001">
    <property type="entry name" value="Ribulose bisphosphate carboxylase/oxygenase activase, chloroplastic"/>
    <property type="match status" value="1"/>
</dbReference>
<dbReference type="FunFam" id="3.40.50.300:FF:000258">
    <property type="entry name" value="Ribulose bisphosphate carboxylase/oxygenase activase, chloroplastic"/>
    <property type="match status" value="1"/>
</dbReference>
<dbReference type="Gene3D" id="1.10.8.1070">
    <property type="match status" value="1"/>
</dbReference>
<dbReference type="Gene3D" id="3.40.50.300">
    <property type="entry name" value="P-loop containing nucleotide triphosphate hydrolases"/>
    <property type="match status" value="1"/>
</dbReference>
<dbReference type="InterPro" id="IPR003959">
    <property type="entry name" value="ATPase_AAA_core"/>
</dbReference>
<dbReference type="InterPro" id="IPR027417">
    <property type="entry name" value="P-loop_NTPase"/>
</dbReference>
<dbReference type="InterPro" id="IPR044960">
    <property type="entry name" value="RCA-like"/>
</dbReference>
<dbReference type="InterPro" id="IPR048571">
    <property type="entry name" value="RuBisCO_activase_AAA_helical"/>
</dbReference>
<dbReference type="PANTHER" id="PTHR32429">
    <property type="match status" value="1"/>
</dbReference>
<dbReference type="PANTHER" id="PTHR32429:SF32">
    <property type="entry name" value="RIBULOSE BISPHOSPHATE CARBOXYLASE_OXYGENASE ACTIVASE, CHLOROPLASTIC"/>
    <property type="match status" value="1"/>
</dbReference>
<dbReference type="Pfam" id="PF00004">
    <property type="entry name" value="AAA"/>
    <property type="match status" value="1"/>
</dbReference>
<dbReference type="Pfam" id="PF21228">
    <property type="entry name" value="RuBisCO_activase_AAA_helical"/>
    <property type="match status" value="1"/>
</dbReference>
<dbReference type="SUPFAM" id="SSF52540">
    <property type="entry name" value="P-loop containing nucleoside triphosphate hydrolases"/>
    <property type="match status" value="1"/>
</dbReference>
<keyword id="KW-0002">3D-structure</keyword>
<keyword id="KW-0025">Alternative splicing</keyword>
<keyword id="KW-0067">ATP-binding</keyword>
<keyword id="KW-0150">Chloroplast</keyword>
<keyword id="KW-0547">Nucleotide-binding</keyword>
<keyword id="KW-0597">Phosphoprotein</keyword>
<keyword id="KW-0934">Plastid</keyword>
<keyword id="KW-1185">Reference proteome</keyword>
<keyword id="KW-0809">Transit peptide</keyword>
<reference key="1">
    <citation type="journal article" date="1989" name="Nucleic Acids Res.">
        <title>Structure of an Arabidopsis thaliana cDNA encoding rubisco activase.</title>
        <authorList>
            <person name="Werneke J.M."/>
            <person name="Ogren W.L."/>
        </authorList>
    </citation>
    <scope>NUCLEOTIDE SEQUENCE [MRNA]</scope>
    <source>
        <tissue>Leaf</tissue>
    </source>
</reference>
<reference key="2">
    <citation type="journal article" date="1993" name="Plant Physiol.">
        <title>Molecular basis of the ribulose-1,5-bisphosphate carboxylase/oxygenase activase mutation in Arabidopsis thaliana is a guanine-to-adenine transition at the 5'-splice junction of intron 3.</title>
        <authorList>
            <person name="Orozco B.M."/>
            <person name="McClung C.R."/>
            <person name="Werneke J.M."/>
            <person name="Ogren W.L."/>
        </authorList>
    </citation>
    <scope>NUCLEOTIDE SEQUENCE [GENOMIC DNA]</scope>
</reference>
<reference key="3">
    <citation type="journal article" date="1999" name="Nature">
        <title>Sequence and analysis of chromosome 2 of the plant Arabidopsis thaliana.</title>
        <authorList>
            <person name="Lin X."/>
            <person name="Kaul S."/>
            <person name="Rounsley S.D."/>
            <person name="Shea T.P."/>
            <person name="Benito M.-I."/>
            <person name="Town C.D."/>
            <person name="Fujii C.Y."/>
            <person name="Mason T.M."/>
            <person name="Bowman C.L."/>
            <person name="Barnstead M.E."/>
            <person name="Feldblyum T.V."/>
            <person name="Buell C.R."/>
            <person name="Ketchum K.A."/>
            <person name="Lee J.J."/>
            <person name="Ronning C.M."/>
            <person name="Koo H.L."/>
            <person name="Moffat K.S."/>
            <person name="Cronin L.A."/>
            <person name="Shen M."/>
            <person name="Pai G."/>
            <person name="Van Aken S."/>
            <person name="Umayam L."/>
            <person name="Tallon L.J."/>
            <person name="Gill J.E."/>
            <person name="Adams M.D."/>
            <person name="Carrera A.J."/>
            <person name="Creasy T.H."/>
            <person name="Goodman H.M."/>
            <person name="Somerville C.R."/>
            <person name="Copenhaver G.P."/>
            <person name="Preuss D."/>
            <person name="Nierman W.C."/>
            <person name="White O."/>
            <person name="Eisen J.A."/>
            <person name="Salzberg S.L."/>
            <person name="Fraser C.M."/>
            <person name="Venter J.C."/>
        </authorList>
    </citation>
    <scope>NUCLEOTIDE SEQUENCE [LARGE SCALE GENOMIC DNA]</scope>
    <source>
        <strain>cv. Columbia</strain>
    </source>
</reference>
<reference key="4">
    <citation type="journal article" date="2017" name="Plant J.">
        <title>Araport11: a complete reannotation of the Arabidopsis thaliana reference genome.</title>
        <authorList>
            <person name="Cheng C.Y."/>
            <person name="Krishnakumar V."/>
            <person name="Chan A.P."/>
            <person name="Thibaud-Nissen F."/>
            <person name="Schobel S."/>
            <person name="Town C.D."/>
        </authorList>
    </citation>
    <scope>GENOME REANNOTATION</scope>
    <source>
        <strain>cv. Columbia</strain>
    </source>
</reference>
<reference key="5">
    <citation type="journal article" date="2003" name="Science">
        <title>Empirical analysis of transcriptional activity in the Arabidopsis genome.</title>
        <authorList>
            <person name="Yamada K."/>
            <person name="Lim J."/>
            <person name="Dale J.M."/>
            <person name="Chen H."/>
            <person name="Shinn P."/>
            <person name="Palm C.J."/>
            <person name="Southwick A.M."/>
            <person name="Wu H.C."/>
            <person name="Kim C.J."/>
            <person name="Nguyen M."/>
            <person name="Pham P.K."/>
            <person name="Cheuk R.F."/>
            <person name="Karlin-Newmann G."/>
            <person name="Liu S.X."/>
            <person name="Lam B."/>
            <person name="Sakano H."/>
            <person name="Wu T."/>
            <person name="Yu G."/>
            <person name="Miranda M."/>
            <person name="Quach H.L."/>
            <person name="Tripp M."/>
            <person name="Chang C.H."/>
            <person name="Lee J.M."/>
            <person name="Toriumi M.J."/>
            <person name="Chan M.M."/>
            <person name="Tang C.C."/>
            <person name="Onodera C.S."/>
            <person name="Deng J.M."/>
            <person name="Akiyama K."/>
            <person name="Ansari Y."/>
            <person name="Arakawa T."/>
            <person name="Banh J."/>
            <person name="Banno F."/>
            <person name="Bowser L."/>
            <person name="Brooks S.Y."/>
            <person name="Carninci P."/>
            <person name="Chao Q."/>
            <person name="Choy N."/>
            <person name="Enju A."/>
            <person name="Goldsmith A.D."/>
            <person name="Gurjal M."/>
            <person name="Hansen N.F."/>
            <person name="Hayashizaki Y."/>
            <person name="Johnson-Hopson C."/>
            <person name="Hsuan V.W."/>
            <person name="Iida K."/>
            <person name="Karnes M."/>
            <person name="Khan S."/>
            <person name="Koesema E."/>
            <person name="Ishida J."/>
            <person name="Jiang P.X."/>
            <person name="Jones T."/>
            <person name="Kawai J."/>
            <person name="Kamiya A."/>
            <person name="Meyers C."/>
            <person name="Nakajima M."/>
            <person name="Narusaka M."/>
            <person name="Seki M."/>
            <person name="Sakurai T."/>
            <person name="Satou M."/>
            <person name="Tamse R."/>
            <person name="Vaysberg M."/>
            <person name="Wallender E.K."/>
            <person name="Wong C."/>
            <person name="Yamamura Y."/>
            <person name="Yuan S."/>
            <person name="Shinozaki K."/>
            <person name="Davis R.W."/>
            <person name="Theologis A."/>
            <person name="Ecker J.R."/>
        </authorList>
    </citation>
    <scope>NUCLEOTIDE SEQUENCE [LARGE SCALE MRNA] (ISOFORM SHORT)</scope>
    <source>
        <strain>cv. Columbia</strain>
    </source>
</reference>
<reference key="6">
    <citation type="submission" date="2002-03" db="EMBL/GenBank/DDBJ databases">
        <title>Full-length cDNA from Arabidopsis thaliana.</title>
        <authorList>
            <person name="Brover V.V."/>
            <person name="Troukhan M.E."/>
            <person name="Alexandrov N.A."/>
            <person name="Lu Y.-P."/>
            <person name="Flavell R.B."/>
            <person name="Feldmann K.A."/>
        </authorList>
    </citation>
    <scope>NUCLEOTIDE SEQUENCE [LARGE SCALE MRNA]</scope>
</reference>
<reference key="7">
    <citation type="journal article" date="1989" name="Plant Cell">
        <title>Alternative mRNA splicing generates the two ribulosebisphosphate carboxylase/oxygenase activase polypeptides in spinach and Arabidopsis.</title>
        <authorList>
            <person name="Werneke J.M."/>
            <person name="Chatfield J.M."/>
            <person name="Ogren W.L."/>
        </authorList>
    </citation>
    <scope>ALTERNATIVE SPLICING</scope>
</reference>
<reference key="8">
    <citation type="journal article" date="2003" name="Mol. Cell. Proteomics">
        <title>Proteomics of the chloroplast envelope membranes from Arabidopsis thaliana.</title>
        <authorList>
            <person name="Ferro M."/>
            <person name="Salvi D."/>
            <person name="Brugiere S."/>
            <person name="Miras S."/>
            <person name="Kowalski S."/>
            <person name="Louwagie M."/>
            <person name="Garin J."/>
            <person name="Joyard J."/>
            <person name="Rolland N."/>
        </authorList>
    </citation>
    <scope>IDENTIFICATION BY MASS SPECTROMETRY</scope>
    <scope>SUBCELLULAR LOCATION [LARGE SCALE ANALYSIS]</scope>
    <source>
        <strain>cv. Wassilewskija</strain>
    </source>
</reference>
<reference key="9">
    <citation type="journal article" date="2006" name="Plant Physiol.">
        <title>Protein profiling of plastoglobules in chloroplasts and chromoplasts. A surprising site for differential accumulation of metabolic enzymes.</title>
        <authorList>
            <person name="Ytterberg A.J."/>
            <person name="Peltier J.-B."/>
            <person name="van Wijk K.J."/>
        </authorList>
    </citation>
    <scope>IDENTIFICATION BY MASS SPECTROMETRY</scope>
    <scope>SUBCELLULAR LOCATION [LARGE SCALE ANALYSIS]</scope>
    <source>
        <strain>cv. Columbia</strain>
    </source>
</reference>
<reference key="10">
    <citation type="journal article" date="2009" name="J. Proteomics">
        <title>Phosphoproteomic analysis of nuclei-enriched fractions from Arabidopsis thaliana.</title>
        <authorList>
            <person name="Jones A.M.E."/>
            <person name="MacLean D."/>
            <person name="Studholme D.J."/>
            <person name="Serna-Sanz A."/>
            <person name="Andreasson E."/>
            <person name="Rathjen J.P."/>
            <person name="Peck S.C."/>
        </authorList>
    </citation>
    <scope>IDENTIFICATION BY MASS SPECTROMETRY [LARGE SCALE ANALYSIS]</scope>
    <source>
        <strain>cv. Columbia</strain>
    </source>
</reference>
<reference key="11">
    <citation type="journal article" date="2009" name="Plant Physiol.">
        <title>Large-scale Arabidopsis phosphoproteome profiling reveals novel chloroplast kinase substrates and phosphorylation networks.</title>
        <authorList>
            <person name="Reiland S."/>
            <person name="Messerli G."/>
            <person name="Baerenfaller K."/>
            <person name="Gerrits B."/>
            <person name="Endler A."/>
            <person name="Grossmann J."/>
            <person name="Gruissem W."/>
            <person name="Baginsky S."/>
        </authorList>
    </citation>
    <scope>IDENTIFICATION BY MASS SPECTROMETRY [LARGE SCALE ANALYSIS]</scope>
</reference>
<reference key="12">
    <citation type="journal article" date="2012" name="J. Proteome Res.">
        <title>Identification of phosphoproteins in Arabidopsis thaliana leaves using polyethylene glycol fractionation, immobilized metal-ion affinity chromatography, two-dimensional gel electrophoresis and mass spectrometry.</title>
        <authorList>
            <person name="Aryal U.K."/>
            <person name="Krochko J.E."/>
            <person name="Ross A.R."/>
        </authorList>
    </citation>
    <scope>PHOSPHORYLATION [LARGE SCALE ANALYSIS] AT THR-283</scope>
    <scope>IDENTIFICATION BY MASS SPECTROMETRY [LARGE SCALE ANALYSIS]</scope>
</reference>
<reference key="13">
    <citation type="journal article" date="2012" name="Mol. Cell. Proteomics">
        <title>Comparative large-scale characterisation of plant vs. mammal proteins reveals similar and idiosyncratic N-alpha acetylation features.</title>
        <authorList>
            <person name="Bienvenut W.V."/>
            <person name="Sumpton D."/>
            <person name="Martinez A."/>
            <person name="Lilla S."/>
            <person name="Espagne C."/>
            <person name="Meinnel T."/>
            <person name="Giglione C."/>
        </authorList>
    </citation>
    <scope>IDENTIFICATION BY MASS SPECTROMETRY [LARGE SCALE ANALYSIS]</scope>
</reference>
<reference key="14">
    <citation type="journal article" date="2016" name="Front. Plant Sci.">
        <title>The plastid casein kinase 2 phosphorylates Rubisco activase at the Thr-78 Site but is not essential for regulation of Rubisco activation state.</title>
        <authorList>
            <person name="Kim S.Y."/>
            <person name="Bender K.W."/>
            <person name="Walker B.J."/>
            <person name="Zielinski R.E."/>
            <person name="Spalding M.H."/>
            <person name="Ort D.R."/>
            <person name="Huber S.C."/>
        </authorList>
    </citation>
    <scope>PHOSPHORYLATION AT THR-78</scope>
</reference>
<reference key="15">
    <citation type="journal article" date="2015" name="Acta Crystallogr. D">
        <title>Structure of Arabidopsis thaliana Rubisco activase.</title>
        <authorList>
            <person name="Hasse D."/>
            <person name="Larsson A.M."/>
            <person name="Andersson I."/>
        </authorList>
    </citation>
    <scope>X-RAY CRYSTALLOGRAPHY (2.90 ANGSTROMS) OF 59-437</scope>
</reference>
<gene>
    <name type="primary">RCA</name>
    <name type="ordered locus">At2g39730</name>
    <name type="ORF">T5I7.3</name>
</gene>
<accession>P10896</accession>
<accession>Q39197</accession>
<accession>Q39198</accession>
<accession>Q8H172</accession>
<accession>Q940T8</accession>
<accession>Q941B7</accession>
<feature type="transit peptide" description="Chloroplast">
    <location>
        <begin position="1"/>
        <end position="58"/>
    </location>
</feature>
<feature type="chain" id="PRO_0000030228" description="Ribulose bisphosphate carboxylase/oxygenase activase, chloroplastic">
    <location>
        <begin position="59"/>
        <end position="474"/>
    </location>
</feature>
<feature type="binding site" evidence="1">
    <location>
        <begin position="165"/>
        <end position="172"/>
    </location>
    <ligand>
        <name>ATP</name>
        <dbReference type="ChEBI" id="CHEBI:30616"/>
    </ligand>
</feature>
<feature type="modified residue" description="Phosphothreonine; by CK2" evidence="3">
    <location>
        <position position="78"/>
    </location>
</feature>
<feature type="modified residue" description="Phosphothreonine" evidence="6">
    <location>
        <position position="283"/>
    </location>
</feature>
<feature type="splice variant" id="VSP_005539" description="In isoform Short." evidence="4">
    <original>GAQQVNLPVPEGCTDPVAENFDPTARSDDGTCVYNF</original>
    <variation>TEEKEPSK</variation>
    <location>
        <begin position="439"/>
        <end position="474"/>
    </location>
</feature>
<feature type="sequence conflict" description="In Ref. 1; CAA32429." evidence="5" ref="1">
    <original>IW</original>
    <variation>SR</variation>
    <location>
        <begin position="163"/>
        <end position="164"/>
    </location>
</feature>
<feature type="sequence conflict" description="In Ref. 1; CAA32429." evidence="5" ref="1">
    <original>PA</original>
    <variation>VR</variation>
    <location>
        <begin position="202"/>
        <end position="203"/>
    </location>
</feature>
<feature type="sequence conflict" description="In Ref. 5; AAN18180." evidence="5" ref="5">
    <original>F</original>
    <variation>L</variation>
    <location>
        <position position="226"/>
    </location>
</feature>
<feature type="sequence conflict" description="In Ref. 1; CAA32429." evidence="5" ref="1">
    <original>A</original>
    <variation>G</variation>
    <location>
        <position position="292"/>
    </location>
</feature>
<feature type="sequence conflict" description="In Ref. 1; CAA32429." evidence="5" ref="1">
    <original>R</original>
    <variation>L</variation>
    <location>
        <position position="296"/>
    </location>
</feature>
<feature type="sequence conflict" description="In Ref. 1; CAA32429." evidence="5" ref="1">
    <original>YWA</original>
    <variation>LTG</variation>
    <location>
        <begin position="304"/>
        <end position="306"/>
    </location>
</feature>
<feature type="sequence conflict" description="In Ref. 1; CAA32429." evidence="5" ref="1">
    <original>CK</original>
    <variation>W</variation>
    <location>
        <begin position="316"/>
        <end position="317"/>
    </location>
</feature>
<feature type="sequence conflict" description="In Ref. 5; AAN18180/AAK96483." evidence="5" ref="5">
    <original>G</original>
    <variation>D</variation>
    <location>
        <position position="339"/>
    </location>
</feature>
<feature type="sequence conflict" description="In Ref. 1; CAA32429." evidence="5" ref="1">
    <original>QQ</original>
    <variation>HE</variation>
    <location>
        <begin position="441"/>
        <end position="442"/>
    </location>
</feature>
<feature type="helix" evidence="7">
    <location>
        <begin position="135"/>
        <end position="147"/>
    </location>
</feature>
<feature type="strand" evidence="7">
    <location>
        <begin position="159"/>
        <end position="164"/>
    </location>
</feature>
<feature type="helix" evidence="7">
    <location>
        <begin position="171"/>
        <end position="181"/>
    </location>
</feature>
<feature type="strand" evidence="7">
    <location>
        <begin position="187"/>
        <end position="190"/>
    </location>
</feature>
<feature type="helix" evidence="7">
    <location>
        <begin position="204"/>
        <end position="218"/>
    </location>
</feature>
<feature type="strand" evidence="7">
    <location>
        <begin position="225"/>
        <end position="227"/>
    </location>
</feature>
<feature type="helix" evidence="7">
    <location>
        <begin position="241"/>
        <end position="253"/>
    </location>
</feature>
<feature type="strand" evidence="7">
    <location>
        <begin position="255"/>
        <end position="257"/>
    </location>
</feature>
<feature type="strand" evidence="7">
    <location>
        <begin position="280"/>
        <end position="286"/>
    </location>
</feature>
<feature type="helix" evidence="7">
    <location>
        <begin position="292"/>
        <end position="297"/>
    </location>
</feature>
<feature type="strand" evidence="7">
    <location>
        <begin position="299"/>
        <end position="304"/>
    </location>
</feature>
<feature type="helix" evidence="7">
    <location>
        <begin position="309"/>
        <end position="319"/>
    </location>
</feature>
<feature type="strand" evidence="7">
    <location>
        <begin position="321"/>
        <end position="324"/>
    </location>
</feature>
<feature type="helix" evidence="7">
    <location>
        <begin position="327"/>
        <end position="336"/>
    </location>
</feature>
<feature type="helix" evidence="7">
    <location>
        <begin position="342"/>
        <end position="364"/>
    </location>
</feature>
<feature type="helix" evidence="7">
    <location>
        <begin position="366"/>
        <end position="368"/>
    </location>
</feature>
<feature type="helix" evidence="7">
    <location>
        <begin position="369"/>
        <end position="373"/>
    </location>
</feature>
<feature type="strand" evidence="7">
    <location>
        <begin position="376"/>
        <end position="378"/>
    </location>
</feature>
<feature type="helix" evidence="7">
    <location>
        <begin position="390"/>
        <end position="414"/>
    </location>
</feature>
<protein>
    <recommendedName>
        <fullName>Ribulose bisphosphate carboxylase/oxygenase activase, chloroplastic</fullName>
        <shortName>RA</shortName>
        <shortName>RuBisCO activase</shortName>
    </recommendedName>
</protein>